<name>RNC_XANOR</name>
<reference key="1">
    <citation type="journal article" date="2005" name="Nucleic Acids Res.">
        <title>The genome sequence of Xanthomonas oryzae pathovar oryzae KACC10331, the bacterial blight pathogen of rice.</title>
        <authorList>
            <person name="Lee B.-M."/>
            <person name="Park Y.-J."/>
            <person name="Park D.-S."/>
            <person name="Kang H.-W."/>
            <person name="Kim J.-G."/>
            <person name="Song E.-S."/>
            <person name="Park I.-C."/>
            <person name="Yoon U.-H."/>
            <person name="Hahn J.-H."/>
            <person name="Koo B.-S."/>
            <person name="Lee G.-B."/>
            <person name="Kim H."/>
            <person name="Park H.-S."/>
            <person name="Yoon K.-O."/>
            <person name="Kim J.-H."/>
            <person name="Jung C.-H."/>
            <person name="Koh N.-H."/>
            <person name="Seo J.-S."/>
            <person name="Go S.-J."/>
        </authorList>
    </citation>
    <scope>NUCLEOTIDE SEQUENCE [LARGE SCALE GENOMIC DNA]</scope>
    <source>
        <strain>KACC10331 / KXO85</strain>
    </source>
</reference>
<gene>
    <name evidence="1" type="primary">rnc</name>
    <name type="ordered locus">XOO1855</name>
</gene>
<proteinExistence type="inferred from homology"/>
<sequence>MSNRIFQRGDPIGHAFADPDLLAQALRHRSAGTPHNERLEFLGDGIVNLLVAEALYQRWPKADEGALTRARAELVREGALAVIGRTLNLGERLTLGPGELKSGGHRRDSILADAVEAIVAAIYLDCGFERCRAVVLPWFEASLAALPVGKAEKDPKTRLQEWLQARQLPLPNYALISESGDEHAKQFHVACILEQPVARAEGQGTSRRLAEQQAATLVIAQLDSRM</sequence>
<organism>
    <name type="scientific">Xanthomonas oryzae pv. oryzae (strain KACC10331 / KXO85)</name>
    <dbReference type="NCBI Taxonomy" id="291331"/>
    <lineage>
        <taxon>Bacteria</taxon>
        <taxon>Pseudomonadati</taxon>
        <taxon>Pseudomonadota</taxon>
        <taxon>Gammaproteobacteria</taxon>
        <taxon>Lysobacterales</taxon>
        <taxon>Lysobacteraceae</taxon>
        <taxon>Xanthomonas</taxon>
    </lineage>
</organism>
<dbReference type="EC" id="3.1.26.3" evidence="1"/>
<dbReference type="EMBL" id="AE013598">
    <property type="protein sequence ID" value="AAW75109.1"/>
    <property type="molecule type" value="Genomic_DNA"/>
</dbReference>
<dbReference type="SMR" id="Q5H1R2"/>
<dbReference type="STRING" id="291331.XOO1855"/>
<dbReference type="KEGG" id="xoo:XOO1855"/>
<dbReference type="PATRIC" id="fig|291331.8.peg.2058"/>
<dbReference type="HOGENOM" id="CLU_000907_1_1_6"/>
<dbReference type="Proteomes" id="UP000006735">
    <property type="component" value="Chromosome"/>
</dbReference>
<dbReference type="GO" id="GO:0005737">
    <property type="term" value="C:cytoplasm"/>
    <property type="evidence" value="ECO:0007669"/>
    <property type="project" value="UniProtKB-SubCell"/>
</dbReference>
<dbReference type="GO" id="GO:0003725">
    <property type="term" value="F:double-stranded RNA binding"/>
    <property type="evidence" value="ECO:0007669"/>
    <property type="project" value="TreeGrafter"/>
</dbReference>
<dbReference type="GO" id="GO:0046872">
    <property type="term" value="F:metal ion binding"/>
    <property type="evidence" value="ECO:0007669"/>
    <property type="project" value="UniProtKB-KW"/>
</dbReference>
<dbReference type="GO" id="GO:0004525">
    <property type="term" value="F:ribonuclease III activity"/>
    <property type="evidence" value="ECO:0007669"/>
    <property type="project" value="UniProtKB-UniRule"/>
</dbReference>
<dbReference type="GO" id="GO:0019843">
    <property type="term" value="F:rRNA binding"/>
    <property type="evidence" value="ECO:0007669"/>
    <property type="project" value="UniProtKB-KW"/>
</dbReference>
<dbReference type="GO" id="GO:0006397">
    <property type="term" value="P:mRNA processing"/>
    <property type="evidence" value="ECO:0007669"/>
    <property type="project" value="UniProtKB-UniRule"/>
</dbReference>
<dbReference type="GO" id="GO:0010468">
    <property type="term" value="P:regulation of gene expression"/>
    <property type="evidence" value="ECO:0007669"/>
    <property type="project" value="TreeGrafter"/>
</dbReference>
<dbReference type="GO" id="GO:0006364">
    <property type="term" value="P:rRNA processing"/>
    <property type="evidence" value="ECO:0007669"/>
    <property type="project" value="UniProtKB-UniRule"/>
</dbReference>
<dbReference type="GO" id="GO:0008033">
    <property type="term" value="P:tRNA processing"/>
    <property type="evidence" value="ECO:0007669"/>
    <property type="project" value="UniProtKB-KW"/>
</dbReference>
<dbReference type="CDD" id="cd10845">
    <property type="entry name" value="DSRM_RNAse_III_family"/>
    <property type="match status" value="1"/>
</dbReference>
<dbReference type="CDD" id="cd00593">
    <property type="entry name" value="RIBOc"/>
    <property type="match status" value="1"/>
</dbReference>
<dbReference type="FunFam" id="1.10.1520.10:FF:000017">
    <property type="entry name" value="Ribonuclease 3"/>
    <property type="match status" value="1"/>
</dbReference>
<dbReference type="FunFam" id="3.30.160.20:FF:000003">
    <property type="entry name" value="Ribonuclease 3"/>
    <property type="match status" value="1"/>
</dbReference>
<dbReference type="Gene3D" id="3.30.160.20">
    <property type="match status" value="1"/>
</dbReference>
<dbReference type="Gene3D" id="1.10.1520.10">
    <property type="entry name" value="Ribonuclease III domain"/>
    <property type="match status" value="1"/>
</dbReference>
<dbReference type="HAMAP" id="MF_00104">
    <property type="entry name" value="RNase_III"/>
    <property type="match status" value="1"/>
</dbReference>
<dbReference type="InterPro" id="IPR014720">
    <property type="entry name" value="dsRBD_dom"/>
</dbReference>
<dbReference type="InterPro" id="IPR011907">
    <property type="entry name" value="RNase_III"/>
</dbReference>
<dbReference type="InterPro" id="IPR000999">
    <property type="entry name" value="RNase_III_dom"/>
</dbReference>
<dbReference type="InterPro" id="IPR036389">
    <property type="entry name" value="RNase_III_sf"/>
</dbReference>
<dbReference type="NCBIfam" id="TIGR02191">
    <property type="entry name" value="RNaseIII"/>
    <property type="match status" value="1"/>
</dbReference>
<dbReference type="PANTHER" id="PTHR11207:SF0">
    <property type="entry name" value="RIBONUCLEASE 3"/>
    <property type="match status" value="1"/>
</dbReference>
<dbReference type="PANTHER" id="PTHR11207">
    <property type="entry name" value="RIBONUCLEASE III"/>
    <property type="match status" value="1"/>
</dbReference>
<dbReference type="Pfam" id="PF00035">
    <property type="entry name" value="dsrm"/>
    <property type="match status" value="1"/>
</dbReference>
<dbReference type="Pfam" id="PF14622">
    <property type="entry name" value="Ribonucleas_3_3"/>
    <property type="match status" value="1"/>
</dbReference>
<dbReference type="SMART" id="SM00358">
    <property type="entry name" value="DSRM"/>
    <property type="match status" value="1"/>
</dbReference>
<dbReference type="SMART" id="SM00535">
    <property type="entry name" value="RIBOc"/>
    <property type="match status" value="1"/>
</dbReference>
<dbReference type="SUPFAM" id="SSF54768">
    <property type="entry name" value="dsRNA-binding domain-like"/>
    <property type="match status" value="1"/>
</dbReference>
<dbReference type="SUPFAM" id="SSF69065">
    <property type="entry name" value="RNase III domain-like"/>
    <property type="match status" value="1"/>
</dbReference>
<dbReference type="PROSITE" id="PS50137">
    <property type="entry name" value="DS_RBD"/>
    <property type="match status" value="1"/>
</dbReference>
<dbReference type="PROSITE" id="PS00517">
    <property type="entry name" value="RNASE_3_1"/>
    <property type="match status" value="1"/>
</dbReference>
<dbReference type="PROSITE" id="PS50142">
    <property type="entry name" value="RNASE_3_2"/>
    <property type="match status" value="1"/>
</dbReference>
<feature type="chain" id="PRO_0000228607" description="Ribonuclease 3">
    <location>
        <begin position="1"/>
        <end position="226"/>
    </location>
</feature>
<feature type="domain" description="RNase III" evidence="1">
    <location>
        <begin position="5"/>
        <end position="127"/>
    </location>
</feature>
<feature type="domain" description="DRBM" evidence="1">
    <location>
        <begin position="154"/>
        <end position="224"/>
    </location>
</feature>
<feature type="active site" evidence="1">
    <location>
        <position position="44"/>
    </location>
</feature>
<feature type="active site" evidence="1">
    <location>
        <position position="116"/>
    </location>
</feature>
<feature type="binding site" evidence="1">
    <location>
        <position position="40"/>
    </location>
    <ligand>
        <name>Mg(2+)</name>
        <dbReference type="ChEBI" id="CHEBI:18420"/>
    </ligand>
</feature>
<feature type="binding site" evidence="1">
    <location>
        <position position="113"/>
    </location>
    <ligand>
        <name>Mg(2+)</name>
        <dbReference type="ChEBI" id="CHEBI:18420"/>
    </ligand>
</feature>
<feature type="binding site" evidence="1">
    <location>
        <position position="116"/>
    </location>
    <ligand>
        <name>Mg(2+)</name>
        <dbReference type="ChEBI" id="CHEBI:18420"/>
    </ligand>
</feature>
<accession>Q5H1R2</accession>
<protein>
    <recommendedName>
        <fullName evidence="1">Ribonuclease 3</fullName>
        <ecNumber evidence="1">3.1.26.3</ecNumber>
    </recommendedName>
    <alternativeName>
        <fullName evidence="1">Ribonuclease III</fullName>
        <shortName evidence="1">RNase III</shortName>
    </alternativeName>
</protein>
<keyword id="KW-0963">Cytoplasm</keyword>
<keyword id="KW-0255">Endonuclease</keyword>
<keyword id="KW-0378">Hydrolase</keyword>
<keyword id="KW-0460">Magnesium</keyword>
<keyword id="KW-0479">Metal-binding</keyword>
<keyword id="KW-0507">mRNA processing</keyword>
<keyword id="KW-0540">Nuclease</keyword>
<keyword id="KW-1185">Reference proteome</keyword>
<keyword id="KW-0694">RNA-binding</keyword>
<keyword id="KW-0698">rRNA processing</keyword>
<keyword id="KW-0699">rRNA-binding</keyword>
<keyword id="KW-0819">tRNA processing</keyword>
<comment type="function">
    <text evidence="1">Digests double-stranded RNA. Involved in the processing of primary rRNA transcript to yield the immediate precursors to the large and small rRNAs (23S and 16S). Processes some mRNAs, and tRNAs when they are encoded in the rRNA operon. Processes pre-crRNA and tracrRNA of type II CRISPR loci if present in the organism.</text>
</comment>
<comment type="catalytic activity">
    <reaction evidence="1">
        <text>Endonucleolytic cleavage to 5'-phosphomonoester.</text>
        <dbReference type="EC" id="3.1.26.3"/>
    </reaction>
</comment>
<comment type="cofactor">
    <cofactor evidence="1">
        <name>Mg(2+)</name>
        <dbReference type="ChEBI" id="CHEBI:18420"/>
    </cofactor>
</comment>
<comment type="subunit">
    <text evidence="1">Homodimer.</text>
</comment>
<comment type="subcellular location">
    <subcellularLocation>
        <location evidence="1">Cytoplasm</location>
    </subcellularLocation>
</comment>
<comment type="similarity">
    <text evidence="1">Belongs to the ribonuclease III family.</text>
</comment>
<evidence type="ECO:0000255" key="1">
    <source>
        <dbReference type="HAMAP-Rule" id="MF_00104"/>
    </source>
</evidence>